<name>LPXB_PARP8</name>
<organism>
    <name type="scientific">Paraburkholderia phymatum (strain DSM 17167 / CIP 108236 / LMG 21445 / STM815)</name>
    <name type="common">Burkholderia phymatum</name>
    <dbReference type="NCBI Taxonomy" id="391038"/>
    <lineage>
        <taxon>Bacteria</taxon>
        <taxon>Pseudomonadati</taxon>
        <taxon>Pseudomonadota</taxon>
        <taxon>Betaproteobacteria</taxon>
        <taxon>Burkholderiales</taxon>
        <taxon>Burkholderiaceae</taxon>
        <taxon>Paraburkholderia</taxon>
    </lineage>
</organism>
<accession>B2JIB3</accession>
<dbReference type="EC" id="2.4.1.182" evidence="1"/>
<dbReference type="EMBL" id="CP001043">
    <property type="protein sequence ID" value="ACC70507.1"/>
    <property type="molecule type" value="Genomic_DNA"/>
</dbReference>
<dbReference type="RefSeq" id="WP_012400721.1">
    <property type="nucleotide sequence ID" value="NC_010622.1"/>
</dbReference>
<dbReference type="SMR" id="B2JIB3"/>
<dbReference type="STRING" id="391038.Bphy_1325"/>
<dbReference type="CAZy" id="GT19">
    <property type="family name" value="Glycosyltransferase Family 19"/>
</dbReference>
<dbReference type="KEGG" id="bph:Bphy_1325"/>
<dbReference type="eggNOG" id="COG0763">
    <property type="taxonomic scope" value="Bacteria"/>
</dbReference>
<dbReference type="HOGENOM" id="CLU_036577_3_0_4"/>
<dbReference type="OrthoDB" id="9801642at2"/>
<dbReference type="UniPathway" id="UPA00973"/>
<dbReference type="Proteomes" id="UP000001192">
    <property type="component" value="Chromosome 1"/>
</dbReference>
<dbReference type="GO" id="GO:0016020">
    <property type="term" value="C:membrane"/>
    <property type="evidence" value="ECO:0007669"/>
    <property type="project" value="GOC"/>
</dbReference>
<dbReference type="GO" id="GO:0008915">
    <property type="term" value="F:lipid-A-disaccharide synthase activity"/>
    <property type="evidence" value="ECO:0007669"/>
    <property type="project" value="UniProtKB-UniRule"/>
</dbReference>
<dbReference type="GO" id="GO:0005543">
    <property type="term" value="F:phospholipid binding"/>
    <property type="evidence" value="ECO:0007669"/>
    <property type="project" value="TreeGrafter"/>
</dbReference>
<dbReference type="GO" id="GO:0009245">
    <property type="term" value="P:lipid A biosynthetic process"/>
    <property type="evidence" value="ECO:0007669"/>
    <property type="project" value="UniProtKB-UniRule"/>
</dbReference>
<dbReference type="HAMAP" id="MF_00392">
    <property type="entry name" value="LpxB"/>
    <property type="match status" value="1"/>
</dbReference>
<dbReference type="InterPro" id="IPR003835">
    <property type="entry name" value="Glyco_trans_19"/>
</dbReference>
<dbReference type="NCBIfam" id="TIGR00215">
    <property type="entry name" value="lpxB"/>
    <property type="match status" value="1"/>
</dbReference>
<dbReference type="PANTHER" id="PTHR30372">
    <property type="entry name" value="LIPID-A-DISACCHARIDE SYNTHASE"/>
    <property type="match status" value="1"/>
</dbReference>
<dbReference type="PANTHER" id="PTHR30372:SF4">
    <property type="entry name" value="LIPID-A-DISACCHARIDE SYNTHASE, MITOCHONDRIAL-RELATED"/>
    <property type="match status" value="1"/>
</dbReference>
<dbReference type="Pfam" id="PF02684">
    <property type="entry name" value="LpxB"/>
    <property type="match status" value="1"/>
</dbReference>
<dbReference type="SUPFAM" id="SSF53756">
    <property type="entry name" value="UDP-Glycosyltransferase/glycogen phosphorylase"/>
    <property type="match status" value="1"/>
</dbReference>
<sequence length="389" mass="42289">MPLPTSPLRLAMVAGEPSGDLLAASMLDGLAARLPDTTQYFGIGGPRMIAKGFDAHFAMEKLSVRGYVEALKHVPEILGIRNELKRQLLAEPPSAFIGVDAPDFNFGLEHPLRDAGIPTIHFVCPSIWAWRGGRIKKIVKAVDHMLCVFPFEKALLEKSGVTATYVGHPLADEIPLEPDTAGARLELGLPESGPVIAVLPGSRRSEIALIGPTFFDAMELMLQREPGVRFVMPAATPALRELLKPLVDAHANLPLTLTDGNAQRAMTAADAILVKSGTVTLEAALLKKPMVISYKVPWLTGQIMRRQGYLPYVGLPNILAGRFVVPEILQHFATPEALADATLTQLRDDANRRTLTEIFTEMHHVLKQNTAQRAAEAVVGVIEARRGRP</sequence>
<proteinExistence type="inferred from homology"/>
<protein>
    <recommendedName>
        <fullName evidence="1">Lipid-A-disaccharide synthase</fullName>
        <ecNumber evidence="1">2.4.1.182</ecNumber>
    </recommendedName>
</protein>
<evidence type="ECO:0000255" key="1">
    <source>
        <dbReference type="HAMAP-Rule" id="MF_00392"/>
    </source>
</evidence>
<reference key="1">
    <citation type="journal article" date="2014" name="Stand. Genomic Sci.">
        <title>Complete genome sequence of Burkholderia phymatum STM815(T), a broad host range and efficient nitrogen-fixing symbiont of Mimosa species.</title>
        <authorList>
            <person name="Moulin L."/>
            <person name="Klonowska A."/>
            <person name="Caroline B."/>
            <person name="Booth K."/>
            <person name="Vriezen J.A."/>
            <person name="Melkonian R."/>
            <person name="James E.K."/>
            <person name="Young J.P."/>
            <person name="Bena G."/>
            <person name="Hauser L."/>
            <person name="Land M."/>
            <person name="Kyrpides N."/>
            <person name="Bruce D."/>
            <person name="Chain P."/>
            <person name="Copeland A."/>
            <person name="Pitluck S."/>
            <person name="Woyke T."/>
            <person name="Lizotte-Waniewski M."/>
            <person name="Bristow J."/>
            <person name="Riley M."/>
        </authorList>
    </citation>
    <scope>NUCLEOTIDE SEQUENCE [LARGE SCALE GENOMIC DNA]</scope>
    <source>
        <strain>DSM 17167 / CIP 108236 / LMG 21445 / STM815</strain>
    </source>
</reference>
<keyword id="KW-0328">Glycosyltransferase</keyword>
<keyword id="KW-0441">Lipid A biosynthesis</keyword>
<keyword id="KW-0444">Lipid biosynthesis</keyword>
<keyword id="KW-0443">Lipid metabolism</keyword>
<keyword id="KW-1185">Reference proteome</keyword>
<keyword id="KW-0808">Transferase</keyword>
<gene>
    <name evidence="1" type="primary">lpxB</name>
    <name type="ordered locus">Bphy_1325</name>
</gene>
<comment type="function">
    <text evidence="1">Condensation of UDP-2,3-diacylglucosamine and 2,3-diacylglucosamine-1-phosphate to form lipid A disaccharide, a precursor of lipid A, a phosphorylated glycolipid that anchors the lipopolysaccharide to the outer membrane of the cell.</text>
</comment>
<comment type="catalytic activity">
    <reaction evidence="1">
        <text>a lipid X + a UDP-2-N,3-O-bis[(3R)-3-hydroxyacyl]-alpha-D-glucosamine = a lipid A disaccharide + UDP + H(+)</text>
        <dbReference type="Rhea" id="RHEA:67828"/>
        <dbReference type="ChEBI" id="CHEBI:15378"/>
        <dbReference type="ChEBI" id="CHEBI:58223"/>
        <dbReference type="ChEBI" id="CHEBI:137748"/>
        <dbReference type="ChEBI" id="CHEBI:176338"/>
        <dbReference type="ChEBI" id="CHEBI:176343"/>
        <dbReference type="EC" id="2.4.1.182"/>
    </reaction>
</comment>
<comment type="pathway">
    <text evidence="1">Bacterial outer membrane biogenesis; LPS lipid A biosynthesis.</text>
</comment>
<comment type="similarity">
    <text evidence="1">Belongs to the LpxB family.</text>
</comment>
<feature type="chain" id="PRO_1000191467" description="Lipid-A-disaccharide synthase">
    <location>
        <begin position="1"/>
        <end position="389"/>
    </location>
</feature>